<evidence type="ECO:0000250" key="1"/>
<evidence type="ECO:0000255" key="2"/>
<evidence type="ECO:0000305" key="3"/>
<proteinExistence type="evidence at protein level"/>
<feature type="chain" id="PRO_0000218972" description="Membrane protein TMS1">
    <location>
        <begin position="1"/>
        <end position="473"/>
    </location>
</feature>
<feature type="topological domain" description="Cytoplasmic" evidence="2">
    <location>
        <begin position="1"/>
        <end position="6"/>
    </location>
</feature>
<feature type="transmembrane region" description="Helical" evidence="2">
    <location>
        <begin position="7"/>
        <end position="29"/>
    </location>
</feature>
<feature type="topological domain" description="Vacuolar" evidence="2">
    <location>
        <begin position="30"/>
        <end position="38"/>
    </location>
</feature>
<feature type="transmembrane region" description="Helical" evidence="2">
    <location>
        <begin position="39"/>
        <end position="61"/>
    </location>
</feature>
<feature type="topological domain" description="Cytoplasmic" evidence="2">
    <location>
        <begin position="62"/>
        <end position="81"/>
    </location>
</feature>
<feature type="transmembrane region" description="Helical" evidence="2">
    <location>
        <begin position="82"/>
        <end position="104"/>
    </location>
</feature>
<feature type="topological domain" description="Vacuolar" evidence="2">
    <location>
        <begin position="105"/>
        <end position="118"/>
    </location>
</feature>
<feature type="transmembrane region" description="Helical" evidence="2">
    <location>
        <begin position="119"/>
        <end position="138"/>
    </location>
</feature>
<feature type="topological domain" description="Cytoplasmic" evidence="2">
    <location>
        <begin position="139"/>
        <end position="144"/>
    </location>
</feature>
<feature type="transmembrane region" description="Helical" evidence="2">
    <location>
        <begin position="145"/>
        <end position="167"/>
    </location>
</feature>
<feature type="topological domain" description="Vacuolar" evidence="2">
    <location>
        <begin position="168"/>
        <end position="194"/>
    </location>
</feature>
<feature type="transmembrane region" description="Helical" evidence="2">
    <location>
        <begin position="195"/>
        <end position="217"/>
    </location>
</feature>
<feature type="topological domain" description="Cytoplasmic" evidence="2">
    <location>
        <begin position="218"/>
        <end position="228"/>
    </location>
</feature>
<feature type="transmembrane region" description="Helical" evidence="2">
    <location>
        <begin position="229"/>
        <end position="246"/>
    </location>
</feature>
<feature type="topological domain" description="Vacuolar" evidence="2">
    <location>
        <begin position="247"/>
        <end position="295"/>
    </location>
</feature>
<feature type="transmembrane region" description="Helical" evidence="2">
    <location>
        <begin position="296"/>
        <end position="318"/>
    </location>
</feature>
<feature type="topological domain" description="Cytoplasmic" evidence="2">
    <location>
        <begin position="319"/>
        <end position="398"/>
    </location>
</feature>
<feature type="transmembrane region" description="Helical" evidence="2">
    <location>
        <begin position="399"/>
        <end position="421"/>
    </location>
</feature>
<feature type="topological domain" description="Vacuolar" evidence="2">
    <location>
        <begin position="422"/>
        <end position="435"/>
    </location>
</feature>
<feature type="transmembrane region" description="Helical" evidence="2">
    <location>
        <begin position="436"/>
        <end position="458"/>
    </location>
</feature>
<feature type="topological domain" description="Cytoplasmic" evidence="2">
    <location>
        <begin position="459"/>
        <end position="473"/>
    </location>
</feature>
<name>TMS1_YEAST</name>
<sequence>MGAVISLPVSMAGSFVASCFGGCCSNLVTKTASSLGSSSLGTRLLYAVWLLLNSLISWVSYSANKSILWPGKTCTGTGECGFFTVHRLNFALGCLHLILALVLTGVKSTNDVRAALQNSWWSLKFILYLCLIVLSFVIPNDFYIFFSKWVSVPSGAIFILVGLILLVDFAHEWAETCISHVESEDEDSSFWQRFLVLGTTSMYTASIIMTVVMYVMFCHQQCNMNQTAVTVNLILTVITLVLSVNPKIQEANPKSGLAQSSMVSVYCTYLTMSAMSSEPDDKMCNPLVRSSGTRKFSIILGSLFTFIAIAYTTTRAAANSAFQGTNTNGAIYLGNDIEYEGLGGQTRNQLRYEAIKQAVEEGSLPESALYDTAWLGTSSPTGAMDNQNDDERTGTKYNYTLFHVIFFLATQWIAILLTINVTQDDVGDFIPVGRTYFYSWVKIVSAWICYALYGWTVVAPAIMPDRFDYENYY</sequence>
<protein>
    <recommendedName>
        <fullName>Membrane protein TMS1</fullName>
    </recommendedName>
</protein>
<accession>Q12116</accession>
<accession>D6VS91</accession>
<keyword id="KW-0472">Membrane</keyword>
<keyword id="KW-1185">Reference proteome</keyword>
<keyword id="KW-0812">Transmembrane</keyword>
<keyword id="KW-1133">Transmembrane helix</keyword>
<comment type="subcellular location">
    <subcellularLocation>
        <location evidence="1">Membrane</location>
        <topology evidence="1">Multi-pass membrane protein</topology>
    </subcellularLocation>
</comment>
<comment type="similarity">
    <text evidence="3">Belongs to the TDE1 family.</text>
</comment>
<organism>
    <name type="scientific">Saccharomyces cerevisiae (strain ATCC 204508 / S288c)</name>
    <name type="common">Baker's yeast</name>
    <dbReference type="NCBI Taxonomy" id="559292"/>
    <lineage>
        <taxon>Eukaryota</taxon>
        <taxon>Fungi</taxon>
        <taxon>Dikarya</taxon>
        <taxon>Ascomycota</taxon>
        <taxon>Saccharomycotina</taxon>
        <taxon>Saccharomycetes</taxon>
        <taxon>Saccharomycetales</taxon>
        <taxon>Saccharomycetaceae</taxon>
        <taxon>Saccharomyces</taxon>
    </lineage>
</organism>
<reference key="1">
    <citation type="journal article" date="1997" name="Nature">
        <title>The nucleotide sequence of Saccharomyces cerevisiae chromosome IV.</title>
        <authorList>
            <person name="Jacq C."/>
            <person name="Alt-Moerbe J."/>
            <person name="Andre B."/>
            <person name="Arnold W."/>
            <person name="Bahr A."/>
            <person name="Ballesta J.P.G."/>
            <person name="Bargues M."/>
            <person name="Baron L."/>
            <person name="Becker A."/>
            <person name="Biteau N."/>
            <person name="Bloecker H."/>
            <person name="Blugeon C."/>
            <person name="Boskovic J."/>
            <person name="Brandt P."/>
            <person name="Brueckner M."/>
            <person name="Buitrago M.J."/>
            <person name="Coster F."/>
            <person name="Delaveau T."/>
            <person name="del Rey F."/>
            <person name="Dujon B."/>
            <person name="Eide L.G."/>
            <person name="Garcia-Cantalejo J.M."/>
            <person name="Goffeau A."/>
            <person name="Gomez-Peris A."/>
            <person name="Granotier C."/>
            <person name="Hanemann V."/>
            <person name="Hankeln T."/>
            <person name="Hoheisel J.D."/>
            <person name="Jaeger W."/>
            <person name="Jimenez A."/>
            <person name="Jonniaux J.-L."/>
            <person name="Kraemer C."/>
            <person name="Kuester H."/>
            <person name="Laamanen P."/>
            <person name="Legros Y."/>
            <person name="Louis E.J."/>
            <person name="Moeller-Rieker S."/>
            <person name="Monnet A."/>
            <person name="Moro M."/>
            <person name="Mueller-Auer S."/>
            <person name="Nussbaumer B."/>
            <person name="Paricio N."/>
            <person name="Paulin L."/>
            <person name="Perea J."/>
            <person name="Perez-Alonso M."/>
            <person name="Perez-Ortin J.E."/>
            <person name="Pohl T.M."/>
            <person name="Prydz H."/>
            <person name="Purnelle B."/>
            <person name="Rasmussen S.W."/>
            <person name="Remacha M.A."/>
            <person name="Revuelta J.L."/>
            <person name="Rieger M."/>
            <person name="Salom D."/>
            <person name="Saluz H.P."/>
            <person name="Saiz J.E."/>
            <person name="Saren A.-M."/>
            <person name="Schaefer M."/>
            <person name="Scharfe M."/>
            <person name="Schmidt E.R."/>
            <person name="Schneider C."/>
            <person name="Scholler P."/>
            <person name="Schwarz S."/>
            <person name="Soler-Mira A."/>
            <person name="Urrestarazu L.A."/>
            <person name="Verhasselt P."/>
            <person name="Vissers S."/>
            <person name="Voet M."/>
            <person name="Volckaert G."/>
            <person name="Wagner G."/>
            <person name="Wambutt R."/>
            <person name="Wedler E."/>
            <person name="Wedler H."/>
            <person name="Woelfl S."/>
            <person name="Harris D.E."/>
            <person name="Bowman S."/>
            <person name="Brown D."/>
            <person name="Churcher C.M."/>
            <person name="Connor R."/>
            <person name="Dedman K."/>
            <person name="Gentles S."/>
            <person name="Hamlin N."/>
            <person name="Hunt S."/>
            <person name="Jones L."/>
            <person name="McDonald S."/>
            <person name="Murphy L.D."/>
            <person name="Niblett D."/>
            <person name="Odell C."/>
            <person name="Oliver K."/>
            <person name="Rajandream M.A."/>
            <person name="Richards C."/>
            <person name="Shore L."/>
            <person name="Walsh S.V."/>
            <person name="Barrell B.G."/>
            <person name="Dietrich F.S."/>
            <person name="Mulligan J.T."/>
            <person name="Allen E."/>
            <person name="Araujo R."/>
            <person name="Aviles E."/>
            <person name="Berno A."/>
            <person name="Carpenter J."/>
            <person name="Chen E."/>
            <person name="Cherry J.M."/>
            <person name="Chung E."/>
            <person name="Duncan M."/>
            <person name="Hunicke-Smith S."/>
            <person name="Hyman R.W."/>
            <person name="Komp C."/>
            <person name="Lashkari D."/>
            <person name="Lew H."/>
            <person name="Lin D."/>
            <person name="Mosedale D."/>
            <person name="Nakahara K."/>
            <person name="Namath A."/>
            <person name="Oefner P."/>
            <person name="Oh C."/>
            <person name="Petel F.X."/>
            <person name="Roberts D."/>
            <person name="Schramm S."/>
            <person name="Schroeder M."/>
            <person name="Shogren T."/>
            <person name="Shroff N."/>
            <person name="Winant A."/>
            <person name="Yelton M.A."/>
            <person name="Botstein D."/>
            <person name="Davis R.W."/>
            <person name="Johnston M."/>
            <person name="Andrews S."/>
            <person name="Brinkman R."/>
            <person name="Cooper J."/>
            <person name="Ding H."/>
            <person name="Du Z."/>
            <person name="Favello A."/>
            <person name="Fulton L."/>
            <person name="Gattung S."/>
            <person name="Greco T."/>
            <person name="Hallsworth K."/>
            <person name="Hawkins J."/>
            <person name="Hillier L.W."/>
            <person name="Jier M."/>
            <person name="Johnson D."/>
            <person name="Johnston L."/>
            <person name="Kirsten J."/>
            <person name="Kucaba T."/>
            <person name="Langston Y."/>
            <person name="Latreille P."/>
            <person name="Le T."/>
            <person name="Mardis E."/>
            <person name="Menezes S."/>
            <person name="Miller N."/>
            <person name="Nhan M."/>
            <person name="Pauley A."/>
            <person name="Peluso D."/>
            <person name="Rifkin L."/>
            <person name="Riles L."/>
            <person name="Taich A."/>
            <person name="Trevaskis E."/>
            <person name="Vignati D."/>
            <person name="Wilcox L."/>
            <person name="Wohldman P."/>
            <person name="Vaudin M."/>
            <person name="Wilson R."/>
            <person name="Waterston R."/>
            <person name="Albermann K."/>
            <person name="Hani J."/>
            <person name="Heumann K."/>
            <person name="Kleine K."/>
            <person name="Mewes H.-W."/>
            <person name="Zollner A."/>
            <person name="Zaccaria P."/>
        </authorList>
    </citation>
    <scope>NUCLEOTIDE SEQUENCE [LARGE SCALE GENOMIC DNA]</scope>
    <source>
        <strain>ATCC 204508 / S288c</strain>
    </source>
</reference>
<reference key="2">
    <citation type="journal article" date="2014" name="G3 (Bethesda)">
        <title>The reference genome sequence of Saccharomyces cerevisiae: Then and now.</title>
        <authorList>
            <person name="Engel S.R."/>
            <person name="Dietrich F.S."/>
            <person name="Fisk D.G."/>
            <person name="Binkley G."/>
            <person name="Balakrishnan R."/>
            <person name="Costanzo M.C."/>
            <person name="Dwight S.S."/>
            <person name="Hitz B.C."/>
            <person name="Karra K."/>
            <person name="Nash R.S."/>
            <person name="Weng S."/>
            <person name="Wong E.D."/>
            <person name="Lloyd P."/>
            <person name="Skrzypek M.S."/>
            <person name="Miyasato S.R."/>
            <person name="Simison M."/>
            <person name="Cherry J.M."/>
        </authorList>
    </citation>
    <scope>GENOME REANNOTATION</scope>
    <source>
        <strain>ATCC 204508 / S288c</strain>
    </source>
</reference>
<reference key="3">
    <citation type="journal article" date="2000" name="J. Exp. Biol.">
        <title>Identification of a ubiquitous family of membrane proteins and their expression in mouse brain.</title>
        <authorList>
            <person name="Grossman T.R."/>
            <person name="Luque J.M."/>
            <person name="Nelson N."/>
        </authorList>
    </citation>
    <scope>GENE NAME</scope>
</reference>
<reference key="4">
    <citation type="journal article" date="2006" name="Proc. Natl. Acad. Sci. U.S.A.">
        <title>A global topology map of the Saccharomyces cerevisiae membrane proteome.</title>
        <authorList>
            <person name="Kim H."/>
            <person name="Melen K."/>
            <person name="Oesterberg M."/>
            <person name="von Heijne G."/>
        </authorList>
    </citation>
    <scope>TOPOLOGY [LARGE SCALE ANALYSIS]</scope>
    <source>
        <strain>ATCC 208353 / W303-1A</strain>
    </source>
</reference>
<gene>
    <name type="primary">TMS1</name>
    <name type="ordered locus">YDR105C</name>
</gene>
<dbReference type="EMBL" id="Z47746">
    <property type="protein sequence ID" value="CAA87681.1"/>
    <property type="molecule type" value="Genomic_DNA"/>
</dbReference>
<dbReference type="EMBL" id="Z48758">
    <property type="protein sequence ID" value="CAA88659.1"/>
    <property type="molecule type" value="Genomic_DNA"/>
</dbReference>
<dbReference type="EMBL" id="BK006938">
    <property type="protein sequence ID" value="DAA11951.1"/>
    <property type="molecule type" value="Genomic_DNA"/>
</dbReference>
<dbReference type="PIR" id="S51256">
    <property type="entry name" value="S51256"/>
</dbReference>
<dbReference type="RefSeq" id="NP_010390.3">
    <property type="nucleotide sequence ID" value="NM_001180413.3"/>
</dbReference>
<dbReference type="SMR" id="Q12116"/>
<dbReference type="BioGRID" id="32162">
    <property type="interactions" value="159"/>
</dbReference>
<dbReference type="DIP" id="DIP-5198N"/>
<dbReference type="FunCoup" id="Q12116">
    <property type="interactions" value="633"/>
</dbReference>
<dbReference type="IntAct" id="Q12116">
    <property type="interactions" value="5"/>
</dbReference>
<dbReference type="MINT" id="Q12116"/>
<dbReference type="STRING" id="4932.YDR105C"/>
<dbReference type="iPTMnet" id="Q12116"/>
<dbReference type="PaxDb" id="4932-YDR105C"/>
<dbReference type="PeptideAtlas" id="Q12116"/>
<dbReference type="EnsemblFungi" id="YDR105C_mRNA">
    <property type="protein sequence ID" value="YDR105C"/>
    <property type="gene ID" value="YDR105C"/>
</dbReference>
<dbReference type="GeneID" id="851682"/>
<dbReference type="KEGG" id="sce:YDR105C"/>
<dbReference type="AGR" id="SGD:S000002512"/>
<dbReference type="SGD" id="S000002512">
    <property type="gene designation" value="TMS1"/>
</dbReference>
<dbReference type="VEuPathDB" id="FungiDB:YDR105C"/>
<dbReference type="eggNOG" id="KOG2592">
    <property type="taxonomic scope" value="Eukaryota"/>
</dbReference>
<dbReference type="GeneTree" id="ENSGT01030000234623"/>
<dbReference type="HOGENOM" id="CLU_029574_2_0_1"/>
<dbReference type="InParanoid" id="Q12116"/>
<dbReference type="OMA" id="DKHCNPL"/>
<dbReference type="OrthoDB" id="5963193at2759"/>
<dbReference type="BioCyc" id="YEAST:G3O-29707-MONOMER"/>
<dbReference type="Reactome" id="R-SCE-977347">
    <property type="pathway name" value="Serine biosynthesis"/>
</dbReference>
<dbReference type="BioGRID-ORCS" id="851682">
    <property type="hits" value="3 hits in 10 CRISPR screens"/>
</dbReference>
<dbReference type="PRO" id="PR:Q12116"/>
<dbReference type="Proteomes" id="UP000002311">
    <property type="component" value="Chromosome IV"/>
</dbReference>
<dbReference type="RNAct" id="Q12116">
    <property type="molecule type" value="protein"/>
</dbReference>
<dbReference type="GO" id="GO:0005768">
    <property type="term" value="C:endosome"/>
    <property type="evidence" value="ECO:0000314"/>
    <property type="project" value="SGD"/>
</dbReference>
<dbReference type="GO" id="GO:0000329">
    <property type="term" value="C:fungal-type vacuole membrane"/>
    <property type="evidence" value="ECO:0000314"/>
    <property type="project" value="SGD"/>
</dbReference>
<dbReference type="GO" id="GO:0016020">
    <property type="term" value="C:membrane"/>
    <property type="evidence" value="ECO:0000318"/>
    <property type="project" value="GO_Central"/>
</dbReference>
<dbReference type="GO" id="GO:0045121">
    <property type="term" value="C:membrane raft"/>
    <property type="evidence" value="ECO:0000314"/>
    <property type="project" value="SGD"/>
</dbReference>
<dbReference type="InterPro" id="IPR005016">
    <property type="entry name" value="TDE1/TMS"/>
</dbReference>
<dbReference type="PANTHER" id="PTHR10383">
    <property type="entry name" value="SERINE INCORPORATOR"/>
    <property type="match status" value="1"/>
</dbReference>
<dbReference type="PANTHER" id="PTHR10383:SF9">
    <property type="entry name" value="SERINE INCORPORATOR, ISOFORM F"/>
    <property type="match status" value="1"/>
</dbReference>
<dbReference type="Pfam" id="PF03348">
    <property type="entry name" value="Serinc"/>
    <property type="match status" value="1"/>
</dbReference>